<feature type="chain" id="PRO_1000057918" description="Elongation factor P">
    <location>
        <begin position="1"/>
        <end position="185"/>
    </location>
</feature>
<evidence type="ECO:0000255" key="1">
    <source>
        <dbReference type="HAMAP-Rule" id="MF_00141"/>
    </source>
</evidence>
<proteinExistence type="inferred from homology"/>
<comment type="function">
    <text evidence="1">Involved in peptide bond synthesis. Stimulates efficient translation and peptide-bond synthesis on native or reconstituted 70S ribosomes in vitro. Probably functions indirectly by altering the affinity of the ribosome for aminoacyl-tRNA, thus increasing their reactivity as acceptors for peptidyl transferase.</text>
</comment>
<comment type="pathway">
    <text evidence="1">Protein biosynthesis; polypeptide chain elongation.</text>
</comment>
<comment type="subcellular location">
    <subcellularLocation>
        <location evidence="1">Cytoplasm</location>
    </subcellularLocation>
</comment>
<comment type="similarity">
    <text evidence="1">Belongs to the elongation factor P family.</text>
</comment>
<name>EFP_ALKMQ</name>
<dbReference type="EMBL" id="CP000724">
    <property type="protein sequence ID" value="ABR48643.1"/>
    <property type="molecule type" value="Genomic_DNA"/>
</dbReference>
<dbReference type="RefSeq" id="WP_012063618.1">
    <property type="nucleotide sequence ID" value="NC_009633.1"/>
</dbReference>
<dbReference type="SMR" id="A6TR25"/>
<dbReference type="STRING" id="293826.Amet_2490"/>
<dbReference type="KEGG" id="amt:Amet_2490"/>
<dbReference type="eggNOG" id="COG0231">
    <property type="taxonomic scope" value="Bacteria"/>
</dbReference>
<dbReference type="HOGENOM" id="CLU_074944_0_1_9"/>
<dbReference type="OrthoDB" id="9801844at2"/>
<dbReference type="UniPathway" id="UPA00345"/>
<dbReference type="Proteomes" id="UP000001572">
    <property type="component" value="Chromosome"/>
</dbReference>
<dbReference type="GO" id="GO:0005737">
    <property type="term" value="C:cytoplasm"/>
    <property type="evidence" value="ECO:0007669"/>
    <property type="project" value="UniProtKB-SubCell"/>
</dbReference>
<dbReference type="GO" id="GO:0003746">
    <property type="term" value="F:translation elongation factor activity"/>
    <property type="evidence" value="ECO:0007669"/>
    <property type="project" value="UniProtKB-UniRule"/>
</dbReference>
<dbReference type="GO" id="GO:0043043">
    <property type="term" value="P:peptide biosynthetic process"/>
    <property type="evidence" value="ECO:0007669"/>
    <property type="project" value="InterPro"/>
</dbReference>
<dbReference type="CDD" id="cd04470">
    <property type="entry name" value="S1_EF-P_repeat_1"/>
    <property type="match status" value="1"/>
</dbReference>
<dbReference type="CDD" id="cd05794">
    <property type="entry name" value="S1_EF-P_repeat_2"/>
    <property type="match status" value="1"/>
</dbReference>
<dbReference type="FunFam" id="2.30.30.30:FF:000003">
    <property type="entry name" value="Elongation factor P"/>
    <property type="match status" value="1"/>
</dbReference>
<dbReference type="FunFam" id="2.40.50.140:FF:000004">
    <property type="entry name" value="Elongation factor P"/>
    <property type="match status" value="1"/>
</dbReference>
<dbReference type="FunFam" id="2.40.50.140:FF:000009">
    <property type="entry name" value="Elongation factor P"/>
    <property type="match status" value="1"/>
</dbReference>
<dbReference type="Gene3D" id="2.30.30.30">
    <property type="match status" value="1"/>
</dbReference>
<dbReference type="Gene3D" id="2.40.50.140">
    <property type="entry name" value="Nucleic acid-binding proteins"/>
    <property type="match status" value="2"/>
</dbReference>
<dbReference type="HAMAP" id="MF_00141">
    <property type="entry name" value="EF_P"/>
    <property type="match status" value="1"/>
</dbReference>
<dbReference type="InterPro" id="IPR015365">
    <property type="entry name" value="Elong-fact-P_C"/>
</dbReference>
<dbReference type="InterPro" id="IPR012340">
    <property type="entry name" value="NA-bd_OB-fold"/>
</dbReference>
<dbReference type="InterPro" id="IPR014722">
    <property type="entry name" value="Rib_uL2_dom2"/>
</dbReference>
<dbReference type="InterPro" id="IPR020599">
    <property type="entry name" value="Transl_elong_fac_P/YeiP"/>
</dbReference>
<dbReference type="InterPro" id="IPR013185">
    <property type="entry name" value="Transl_elong_KOW-like"/>
</dbReference>
<dbReference type="InterPro" id="IPR001059">
    <property type="entry name" value="Transl_elong_P/YeiP_cen"/>
</dbReference>
<dbReference type="InterPro" id="IPR013852">
    <property type="entry name" value="Transl_elong_P/YeiP_CS"/>
</dbReference>
<dbReference type="InterPro" id="IPR011768">
    <property type="entry name" value="Transl_elongation_fac_P"/>
</dbReference>
<dbReference type="InterPro" id="IPR008991">
    <property type="entry name" value="Translation_prot_SH3-like_sf"/>
</dbReference>
<dbReference type="NCBIfam" id="TIGR00038">
    <property type="entry name" value="efp"/>
    <property type="match status" value="1"/>
</dbReference>
<dbReference type="NCBIfam" id="NF001810">
    <property type="entry name" value="PRK00529.1"/>
    <property type="match status" value="1"/>
</dbReference>
<dbReference type="PANTHER" id="PTHR30053">
    <property type="entry name" value="ELONGATION FACTOR P"/>
    <property type="match status" value="1"/>
</dbReference>
<dbReference type="PANTHER" id="PTHR30053:SF12">
    <property type="entry name" value="ELONGATION FACTOR P (EF-P) FAMILY PROTEIN"/>
    <property type="match status" value="1"/>
</dbReference>
<dbReference type="Pfam" id="PF01132">
    <property type="entry name" value="EFP"/>
    <property type="match status" value="1"/>
</dbReference>
<dbReference type="Pfam" id="PF08207">
    <property type="entry name" value="EFP_N"/>
    <property type="match status" value="1"/>
</dbReference>
<dbReference type="Pfam" id="PF09285">
    <property type="entry name" value="Elong-fact-P_C"/>
    <property type="match status" value="1"/>
</dbReference>
<dbReference type="PIRSF" id="PIRSF005901">
    <property type="entry name" value="EF-P"/>
    <property type="match status" value="1"/>
</dbReference>
<dbReference type="SMART" id="SM01185">
    <property type="entry name" value="EFP"/>
    <property type="match status" value="1"/>
</dbReference>
<dbReference type="SMART" id="SM00841">
    <property type="entry name" value="Elong-fact-P_C"/>
    <property type="match status" value="1"/>
</dbReference>
<dbReference type="SUPFAM" id="SSF50249">
    <property type="entry name" value="Nucleic acid-binding proteins"/>
    <property type="match status" value="2"/>
</dbReference>
<dbReference type="SUPFAM" id="SSF50104">
    <property type="entry name" value="Translation proteins SH3-like domain"/>
    <property type="match status" value="1"/>
</dbReference>
<dbReference type="PROSITE" id="PS01275">
    <property type="entry name" value="EFP"/>
    <property type="match status" value="1"/>
</dbReference>
<keyword id="KW-0963">Cytoplasm</keyword>
<keyword id="KW-0251">Elongation factor</keyword>
<keyword id="KW-0648">Protein biosynthesis</keyword>
<keyword id="KW-1185">Reference proteome</keyword>
<sequence>MISAGDFRKGVTFVMDGHPYVVIDFQHVKPGKGAAFVRTKYKNLKTGSTREEAFNPSDKFPRAHIETKEMQYLYNDSDLYYFMDNETYEQVPLTLVEVEDAIKYLKENDSAIIKFYEGRPFQVEPPIFVELKVIETEPGVKGDTATNVTKAATVETGAIVYVPVFVNEGNIIKVDTRTGEYMSRV</sequence>
<organism>
    <name type="scientific">Alkaliphilus metalliredigens (strain QYMF)</name>
    <dbReference type="NCBI Taxonomy" id="293826"/>
    <lineage>
        <taxon>Bacteria</taxon>
        <taxon>Bacillati</taxon>
        <taxon>Bacillota</taxon>
        <taxon>Clostridia</taxon>
        <taxon>Peptostreptococcales</taxon>
        <taxon>Natronincolaceae</taxon>
        <taxon>Alkaliphilus</taxon>
    </lineage>
</organism>
<reference key="1">
    <citation type="journal article" date="2016" name="Genome Announc.">
        <title>Complete genome sequence of Alkaliphilus metalliredigens strain QYMF, an alkaliphilic and metal-reducing bacterium isolated from borax-contaminated leachate ponds.</title>
        <authorList>
            <person name="Hwang C."/>
            <person name="Copeland A."/>
            <person name="Lucas S."/>
            <person name="Lapidus A."/>
            <person name="Barry K."/>
            <person name="Detter J.C."/>
            <person name="Glavina Del Rio T."/>
            <person name="Hammon N."/>
            <person name="Israni S."/>
            <person name="Dalin E."/>
            <person name="Tice H."/>
            <person name="Pitluck S."/>
            <person name="Chertkov O."/>
            <person name="Brettin T."/>
            <person name="Bruce D."/>
            <person name="Han C."/>
            <person name="Schmutz J."/>
            <person name="Larimer F."/>
            <person name="Land M.L."/>
            <person name="Hauser L."/>
            <person name="Kyrpides N."/>
            <person name="Mikhailova N."/>
            <person name="Ye Q."/>
            <person name="Zhou J."/>
            <person name="Richardson P."/>
            <person name="Fields M.W."/>
        </authorList>
    </citation>
    <scope>NUCLEOTIDE SEQUENCE [LARGE SCALE GENOMIC DNA]</scope>
    <source>
        <strain>QYMF</strain>
    </source>
</reference>
<protein>
    <recommendedName>
        <fullName evidence="1">Elongation factor P</fullName>
        <shortName evidence="1">EF-P</shortName>
    </recommendedName>
</protein>
<accession>A6TR25</accession>
<gene>
    <name evidence="1" type="primary">efp</name>
    <name type="ordered locus">Amet_2490</name>
</gene>